<dbReference type="EC" id="6.1.1.6" evidence="1"/>
<dbReference type="EMBL" id="CP000446">
    <property type="protein sequence ID" value="ABI37907.1"/>
    <property type="molecule type" value="Genomic_DNA"/>
</dbReference>
<dbReference type="RefSeq" id="WP_011621622.1">
    <property type="nucleotide sequence ID" value="NC_008321.1"/>
</dbReference>
<dbReference type="SMR" id="Q0HM10"/>
<dbReference type="GeneID" id="94729223"/>
<dbReference type="KEGG" id="she:Shewmr4_0827"/>
<dbReference type="HOGENOM" id="CLU_008255_6_0_6"/>
<dbReference type="GO" id="GO:0005829">
    <property type="term" value="C:cytosol"/>
    <property type="evidence" value="ECO:0007669"/>
    <property type="project" value="TreeGrafter"/>
</dbReference>
<dbReference type="GO" id="GO:0005524">
    <property type="term" value="F:ATP binding"/>
    <property type="evidence" value="ECO:0007669"/>
    <property type="project" value="UniProtKB-UniRule"/>
</dbReference>
<dbReference type="GO" id="GO:0004824">
    <property type="term" value="F:lysine-tRNA ligase activity"/>
    <property type="evidence" value="ECO:0007669"/>
    <property type="project" value="UniProtKB-UniRule"/>
</dbReference>
<dbReference type="GO" id="GO:0000287">
    <property type="term" value="F:magnesium ion binding"/>
    <property type="evidence" value="ECO:0007669"/>
    <property type="project" value="UniProtKB-UniRule"/>
</dbReference>
<dbReference type="GO" id="GO:0000049">
    <property type="term" value="F:tRNA binding"/>
    <property type="evidence" value="ECO:0007669"/>
    <property type="project" value="TreeGrafter"/>
</dbReference>
<dbReference type="GO" id="GO:0006430">
    <property type="term" value="P:lysyl-tRNA aminoacylation"/>
    <property type="evidence" value="ECO:0007669"/>
    <property type="project" value="UniProtKB-UniRule"/>
</dbReference>
<dbReference type="CDD" id="cd00775">
    <property type="entry name" value="LysRS_core"/>
    <property type="match status" value="1"/>
</dbReference>
<dbReference type="CDD" id="cd04322">
    <property type="entry name" value="LysRS_N"/>
    <property type="match status" value="1"/>
</dbReference>
<dbReference type="FunFam" id="2.40.50.140:FF:000024">
    <property type="entry name" value="Lysine--tRNA ligase"/>
    <property type="match status" value="1"/>
</dbReference>
<dbReference type="FunFam" id="3.30.930.10:FF:000001">
    <property type="entry name" value="Lysine--tRNA ligase"/>
    <property type="match status" value="1"/>
</dbReference>
<dbReference type="Gene3D" id="3.30.930.10">
    <property type="entry name" value="Bira Bifunctional Protein, Domain 2"/>
    <property type="match status" value="1"/>
</dbReference>
<dbReference type="Gene3D" id="2.40.50.140">
    <property type="entry name" value="Nucleic acid-binding proteins"/>
    <property type="match status" value="1"/>
</dbReference>
<dbReference type="HAMAP" id="MF_00252">
    <property type="entry name" value="Lys_tRNA_synth_class2"/>
    <property type="match status" value="1"/>
</dbReference>
<dbReference type="InterPro" id="IPR004364">
    <property type="entry name" value="Aa-tRNA-synt_II"/>
</dbReference>
<dbReference type="InterPro" id="IPR006195">
    <property type="entry name" value="aa-tRNA-synth_II"/>
</dbReference>
<dbReference type="InterPro" id="IPR045864">
    <property type="entry name" value="aa-tRNA-synth_II/BPL/LPL"/>
</dbReference>
<dbReference type="InterPro" id="IPR002313">
    <property type="entry name" value="Lys-tRNA-ligase_II"/>
</dbReference>
<dbReference type="InterPro" id="IPR044136">
    <property type="entry name" value="Lys-tRNA-ligase_II_N"/>
</dbReference>
<dbReference type="InterPro" id="IPR018149">
    <property type="entry name" value="Lys-tRNA-synth_II_C"/>
</dbReference>
<dbReference type="InterPro" id="IPR012340">
    <property type="entry name" value="NA-bd_OB-fold"/>
</dbReference>
<dbReference type="InterPro" id="IPR004365">
    <property type="entry name" value="NA-bd_OB_tRNA"/>
</dbReference>
<dbReference type="NCBIfam" id="TIGR00499">
    <property type="entry name" value="lysS_bact"/>
    <property type="match status" value="1"/>
</dbReference>
<dbReference type="NCBIfam" id="NF001756">
    <property type="entry name" value="PRK00484.1"/>
    <property type="match status" value="1"/>
</dbReference>
<dbReference type="PANTHER" id="PTHR42918:SF15">
    <property type="entry name" value="LYSINE--TRNA LIGASE, CHLOROPLASTIC_MITOCHONDRIAL"/>
    <property type="match status" value="1"/>
</dbReference>
<dbReference type="PANTHER" id="PTHR42918">
    <property type="entry name" value="LYSYL-TRNA SYNTHETASE"/>
    <property type="match status" value="1"/>
</dbReference>
<dbReference type="Pfam" id="PF00152">
    <property type="entry name" value="tRNA-synt_2"/>
    <property type="match status" value="1"/>
</dbReference>
<dbReference type="Pfam" id="PF01336">
    <property type="entry name" value="tRNA_anti-codon"/>
    <property type="match status" value="1"/>
</dbReference>
<dbReference type="PRINTS" id="PR00982">
    <property type="entry name" value="TRNASYNTHLYS"/>
</dbReference>
<dbReference type="SUPFAM" id="SSF55681">
    <property type="entry name" value="Class II aaRS and biotin synthetases"/>
    <property type="match status" value="1"/>
</dbReference>
<dbReference type="SUPFAM" id="SSF50249">
    <property type="entry name" value="Nucleic acid-binding proteins"/>
    <property type="match status" value="1"/>
</dbReference>
<dbReference type="PROSITE" id="PS50862">
    <property type="entry name" value="AA_TRNA_LIGASE_II"/>
    <property type="match status" value="1"/>
</dbReference>
<accession>Q0HM10</accession>
<sequence>MTEQVQDENKLIAERRAKLESIRPNCSANAHPNTFRRTHKAAELQEKYGQNTKEELEALGFKTSIAGRIMAKRGPFLVIQDVSGRIQAYAEKGVQADLKDRYQGLDIGDIIGVTGQLHLSGKGDLYVNMEEYQLLTKALRPLPEKFHGLTDQETRYRQRYVDLIVNEESRQAFVMRSKVVAAIRNFMIKKEFMEVETPMMHVIPGGASARPFITHHNALDMPMYLRIAPELYLKRLVVGGFERVFEINRNFRNEGLSPRHNPEFTMMEFYMAYADYKDLMDLTEELLSSIAIELLGSAQMPYGEHTVDFGGPYARLSMLEAIQKYNPDNATIQAMTYEQVKDLEFMRELAISLGIKIEKFWTCGQLLEEIFGETAEWQLMQPTFITGYPADISPLARRNDDNHFITDRFEFFIGGREVANGFSELNDAEDQDSRFKAQVDAKDAGDDEAMFYDADYITALEHGLPPTAGQGIGIDRLVMLFTNTHTIRDVILFPAMRPQA</sequence>
<feature type="chain" id="PRO_1000012932" description="Lysine--tRNA ligase">
    <location>
        <begin position="1"/>
        <end position="500"/>
    </location>
</feature>
<feature type="binding site" evidence="1">
    <location>
        <position position="410"/>
    </location>
    <ligand>
        <name>Mg(2+)</name>
        <dbReference type="ChEBI" id="CHEBI:18420"/>
        <label>1</label>
    </ligand>
</feature>
<feature type="binding site" evidence="1">
    <location>
        <position position="417"/>
    </location>
    <ligand>
        <name>Mg(2+)</name>
        <dbReference type="ChEBI" id="CHEBI:18420"/>
        <label>1</label>
    </ligand>
</feature>
<feature type="binding site" evidence="1">
    <location>
        <position position="417"/>
    </location>
    <ligand>
        <name>Mg(2+)</name>
        <dbReference type="ChEBI" id="CHEBI:18420"/>
        <label>2</label>
    </ligand>
</feature>
<organism>
    <name type="scientific">Shewanella sp. (strain MR-4)</name>
    <dbReference type="NCBI Taxonomy" id="60480"/>
    <lineage>
        <taxon>Bacteria</taxon>
        <taxon>Pseudomonadati</taxon>
        <taxon>Pseudomonadota</taxon>
        <taxon>Gammaproteobacteria</taxon>
        <taxon>Alteromonadales</taxon>
        <taxon>Shewanellaceae</taxon>
        <taxon>Shewanella</taxon>
    </lineage>
</organism>
<evidence type="ECO:0000255" key="1">
    <source>
        <dbReference type="HAMAP-Rule" id="MF_00252"/>
    </source>
</evidence>
<protein>
    <recommendedName>
        <fullName evidence="1">Lysine--tRNA ligase</fullName>
        <ecNumber evidence="1">6.1.1.6</ecNumber>
    </recommendedName>
    <alternativeName>
        <fullName evidence="1">Lysyl-tRNA synthetase</fullName>
        <shortName evidence="1">LysRS</shortName>
    </alternativeName>
</protein>
<keyword id="KW-0030">Aminoacyl-tRNA synthetase</keyword>
<keyword id="KW-0067">ATP-binding</keyword>
<keyword id="KW-0963">Cytoplasm</keyword>
<keyword id="KW-0436">Ligase</keyword>
<keyword id="KW-0460">Magnesium</keyword>
<keyword id="KW-0479">Metal-binding</keyword>
<keyword id="KW-0547">Nucleotide-binding</keyword>
<keyword id="KW-0648">Protein biosynthesis</keyword>
<reference key="1">
    <citation type="submission" date="2006-08" db="EMBL/GenBank/DDBJ databases">
        <title>Complete sequence of Shewanella sp. MR-4.</title>
        <authorList>
            <consortium name="US DOE Joint Genome Institute"/>
            <person name="Copeland A."/>
            <person name="Lucas S."/>
            <person name="Lapidus A."/>
            <person name="Barry K."/>
            <person name="Detter J.C."/>
            <person name="Glavina del Rio T."/>
            <person name="Hammon N."/>
            <person name="Israni S."/>
            <person name="Dalin E."/>
            <person name="Tice H."/>
            <person name="Pitluck S."/>
            <person name="Kiss H."/>
            <person name="Brettin T."/>
            <person name="Bruce D."/>
            <person name="Han C."/>
            <person name="Tapia R."/>
            <person name="Gilna P."/>
            <person name="Schmutz J."/>
            <person name="Larimer F."/>
            <person name="Land M."/>
            <person name="Hauser L."/>
            <person name="Kyrpides N."/>
            <person name="Mikhailova N."/>
            <person name="Nealson K."/>
            <person name="Konstantinidis K."/>
            <person name="Klappenbach J."/>
            <person name="Tiedje J."/>
            <person name="Richardson P."/>
        </authorList>
    </citation>
    <scope>NUCLEOTIDE SEQUENCE [LARGE SCALE GENOMIC DNA]</scope>
    <source>
        <strain>MR-4</strain>
    </source>
</reference>
<gene>
    <name evidence="1" type="primary">lysS</name>
    <name type="ordered locus">Shewmr4_0827</name>
</gene>
<name>SYK_SHESM</name>
<proteinExistence type="inferred from homology"/>
<comment type="catalytic activity">
    <reaction evidence="1">
        <text>tRNA(Lys) + L-lysine + ATP = L-lysyl-tRNA(Lys) + AMP + diphosphate</text>
        <dbReference type="Rhea" id="RHEA:20792"/>
        <dbReference type="Rhea" id="RHEA-COMP:9696"/>
        <dbReference type="Rhea" id="RHEA-COMP:9697"/>
        <dbReference type="ChEBI" id="CHEBI:30616"/>
        <dbReference type="ChEBI" id="CHEBI:32551"/>
        <dbReference type="ChEBI" id="CHEBI:33019"/>
        <dbReference type="ChEBI" id="CHEBI:78442"/>
        <dbReference type="ChEBI" id="CHEBI:78529"/>
        <dbReference type="ChEBI" id="CHEBI:456215"/>
        <dbReference type="EC" id="6.1.1.6"/>
    </reaction>
</comment>
<comment type="cofactor">
    <cofactor evidence="1">
        <name>Mg(2+)</name>
        <dbReference type="ChEBI" id="CHEBI:18420"/>
    </cofactor>
    <text evidence="1">Binds 3 Mg(2+) ions per subunit.</text>
</comment>
<comment type="subunit">
    <text evidence="1">Homodimer.</text>
</comment>
<comment type="subcellular location">
    <subcellularLocation>
        <location evidence="1">Cytoplasm</location>
    </subcellularLocation>
</comment>
<comment type="similarity">
    <text evidence="1">Belongs to the class-II aminoacyl-tRNA synthetase family.</text>
</comment>